<keyword id="KW-0227">DNA damage</keyword>
<keyword id="KW-0234">DNA repair</keyword>
<keyword id="KW-0235">DNA replication</keyword>
<keyword id="KW-0436">Ligase</keyword>
<keyword id="KW-0460">Magnesium</keyword>
<keyword id="KW-0464">Manganese</keyword>
<keyword id="KW-0479">Metal-binding</keyword>
<keyword id="KW-0520">NAD</keyword>
<keyword id="KW-0862">Zinc</keyword>
<sequence>MEPIEQQLTELRTTLRHHEYLYHVMDAPEIPDAEYDRLMRELRELEAQRPDLITPDSPTQRVGAAPLTAFNQIRHEVPMLSLDNVFDEESFLAFNKRVQDRLKSTENVIWCCELKLDGLAVSILYENGVLVSAATRGDGTTGEDITSNVRTIRAIPLKLHGDNIPARLEVRGEVFLPQAGFEKINEDARRTGGKVFANPRNAAAGSLRQLDPRITAKRPLTFFCYGVGILEGGELPDTHLGRLLQFKAWGLPVSDRVTLCDSPQAVLDFYHNVEKDRPTLGFDIDGVVIKVNSLALQEQLGFVARAPRWAVAFKFPAQEQMTFVRDVEFQVGRTGAITPVARLEPVQVAGVLVSNATLHNADEIERLGLRIGDKVVIRRAGDVIPQVVNVVLSERPEETRPIVFPTHCPVCGSDVERVEGEAVTRCTGGLICSAQRKESLKHFVSRRAMDVDGMGDKIIDQLVEREYVHTPADLFRLTAGKLTGLDRMGPKSAQNVVNALEKAKATTFARFLYALGIREVGEATAAGLAAYFGTLEALQAATIDELQKVPDVGIVVATHVFNFFAEESNRDVIGQLLAEGVHWPAPVVINVQEIDSPFAGKTVVLTGSLSQMSRDDAKARLVALGAKVAGSVSKKTDLVIAGEAAGSKLAKAQELGITVIDEAEMIRLLGA</sequence>
<evidence type="ECO:0000255" key="1">
    <source>
        <dbReference type="HAMAP-Rule" id="MF_01588"/>
    </source>
</evidence>
<organism>
    <name type="scientific">Salmonella paratyphi B (strain ATCC BAA-1250 / SPB7)</name>
    <dbReference type="NCBI Taxonomy" id="1016998"/>
    <lineage>
        <taxon>Bacteria</taxon>
        <taxon>Pseudomonadati</taxon>
        <taxon>Pseudomonadota</taxon>
        <taxon>Gammaproteobacteria</taxon>
        <taxon>Enterobacterales</taxon>
        <taxon>Enterobacteriaceae</taxon>
        <taxon>Salmonella</taxon>
    </lineage>
</organism>
<protein>
    <recommendedName>
        <fullName evidence="1">DNA ligase</fullName>
        <ecNumber evidence="1">6.5.1.2</ecNumber>
    </recommendedName>
    <alternativeName>
        <fullName evidence="1">Polydeoxyribonucleotide synthase [NAD(+)]</fullName>
    </alternativeName>
</protein>
<accession>A9N362</accession>
<feature type="chain" id="PRO_0000340378" description="DNA ligase">
    <location>
        <begin position="1"/>
        <end position="671"/>
    </location>
</feature>
<feature type="domain" description="BRCT" evidence="1">
    <location>
        <begin position="593"/>
        <end position="671"/>
    </location>
</feature>
<feature type="active site" description="N6-AMP-lysine intermediate" evidence="1">
    <location>
        <position position="115"/>
    </location>
</feature>
<feature type="binding site" evidence="1">
    <location>
        <begin position="32"/>
        <end position="36"/>
    </location>
    <ligand>
        <name>NAD(+)</name>
        <dbReference type="ChEBI" id="CHEBI:57540"/>
    </ligand>
</feature>
<feature type="binding site" evidence="1">
    <location>
        <begin position="81"/>
        <end position="82"/>
    </location>
    <ligand>
        <name>NAD(+)</name>
        <dbReference type="ChEBI" id="CHEBI:57540"/>
    </ligand>
</feature>
<feature type="binding site" evidence="1">
    <location>
        <position position="113"/>
    </location>
    <ligand>
        <name>NAD(+)</name>
        <dbReference type="ChEBI" id="CHEBI:57540"/>
    </ligand>
</feature>
<feature type="binding site" evidence="1">
    <location>
        <position position="136"/>
    </location>
    <ligand>
        <name>NAD(+)</name>
        <dbReference type="ChEBI" id="CHEBI:57540"/>
    </ligand>
</feature>
<feature type="binding site" evidence="1">
    <location>
        <position position="173"/>
    </location>
    <ligand>
        <name>NAD(+)</name>
        <dbReference type="ChEBI" id="CHEBI:57540"/>
    </ligand>
</feature>
<feature type="binding site" evidence="1">
    <location>
        <position position="290"/>
    </location>
    <ligand>
        <name>NAD(+)</name>
        <dbReference type="ChEBI" id="CHEBI:57540"/>
    </ligand>
</feature>
<feature type="binding site" evidence="1">
    <location>
        <position position="314"/>
    </location>
    <ligand>
        <name>NAD(+)</name>
        <dbReference type="ChEBI" id="CHEBI:57540"/>
    </ligand>
</feature>
<feature type="binding site" evidence="1">
    <location>
        <position position="408"/>
    </location>
    <ligand>
        <name>Zn(2+)</name>
        <dbReference type="ChEBI" id="CHEBI:29105"/>
    </ligand>
</feature>
<feature type="binding site" evidence="1">
    <location>
        <position position="411"/>
    </location>
    <ligand>
        <name>Zn(2+)</name>
        <dbReference type="ChEBI" id="CHEBI:29105"/>
    </ligand>
</feature>
<feature type="binding site" evidence="1">
    <location>
        <position position="426"/>
    </location>
    <ligand>
        <name>Zn(2+)</name>
        <dbReference type="ChEBI" id="CHEBI:29105"/>
    </ligand>
</feature>
<feature type="binding site" evidence="1">
    <location>
        <position position="432"/>
    </location>
    <ligand>
        <name>Zn(2+)</name>
        <dbReference type="ChEBI" id="CHEBI:29105"/>
    </ligand>
</feature>
<dbReference type="EC" id="6.5.1.2" evidence="1"/>
<dbReference type="EMBL" id="CP000886">
    <property type="protein sequence ID" value="ABX65962.1"/>
    <property type="molecule type" value="Genomic_DNA"/>
</dbReference>
<dbReference type="RefSeq" id="WP_000433276.1">
    <property type="nucleotide sequence ID" value="NC_010102.1"/>
</dbReference>
<dbReference type="SMR" id="A9N362"/>
<dbReference type="KEGG" id="spq:SPAB_00529"/>
<dbReference type="PATRIC" id="fig|1016998.12.peg.502"/>
<dbReference type="HOGENOM" id="CLU_007764_2_1_6"/>
<dbReference type="BioCyc" id="SENT1016998:SPAB_RS02180-MONOMER"/>
<dbReference type="Proteomes" id="UP000008556">
    <property type="component" value="Chromosome"/>
</dbReference>
<dbReference type="GO" id="GO:0005829">
    <property type="term" value="C:cytosol"/>
    <property type="evidence" value="ECO:0007669"/>
    <property type="project" value="TreeGrafter"/>
</dbReference>
<dbReference type="GO" id="GO:0003677">
    <property type="term" value="F:DNA binding"/>
    <property type="evidence" value="ECO:0007669"/>
    <property type="project" value="InterPro"/>
</dbReference>
<dbReference type="GO" id="GO:0003911">
    <property type="term" value="F:DNA ligase (NAD+) activity"/>
    <property type="evidence" value="ECO:0007669"/>
    <property type="project" value="UniProtKB-UniRule"/>
</dbReference>
<dbReference type="GO" id="GO:0046872">
    <property type="term" value="F:metal ion binding"/>
    <property type="evidence" value="ECO:0007669"/>
    <property type="project" value="UniProtKB-KW"/>
</dbReference>
<dbReference type="GO" id="GO:0006281">
    <property type="term" value="P:DNA repair"/>
    <property type="evidence" value="ECO:0007669"/>
    <property type="project" value="UniProtKB-KW"/>
</dbReference>
<dbReference type="GO" id="GO:0006260">
    <property type="term" value="P:DNA replication"/>
    <property type="evidence" value="ECO:0007669"/>
    <property type="project" value="UniProtKB-KW"/>
</dbReference>
<dbReference type="CDD" id="cd17748">
    <property type="entry name" value="BRCT_DNA_ligase_like"/>
    <property type="match status" value="1"/>
</dbReference>
<dbReference type="CDD" id="cd00114">
    <property type="entry name" value="LIGANc"/>
    <property type="match status" value="1"/>
</dbReference>
<dbReference type="FunFam" id="1.10.150.20:FF:000006">
    <property type="entry name" value="DNA ligase"/>
    <property type="match status" value="1"/>
</dbReference>
<dbReference type="FunFam" id="1.10.150.20:FF:000007">
    <property type="entry name" value="DNA ligase"/>
    <property type="match status" value="1"/>
</dbReference>
<dbReference type="FunFam" id="1.10.287.610:FF:000002">
    <property type="entry name" value="DNA ligase"/>
    <property type="match status" value="1"/>
</dbReference>
<dbReference type="FunFam" id="2.40.50.140:FF:000012">
    <property type="entry name" value="DNA ligase"/>
    <property type="match status" value="1"/>
</dbReference>
<dbReference type="FunFam" id="3.30.470.30:FF:000001">
    <property type="entry name" value="DNA ligase"/>
    <property type="match status" value="1"/>
</dbReference>
<dbReference type="FunFam" id="3.40.50.10190:FF:000004">
    <property type="entry name" value="DNA ligase"/>
    <property type="match status" value="1"/>
</dbReference>
<dbReference type="FunFam" id="6.20.10.30:FF:000001">
    <property type="entry name" value="DNA ligase"/>
    <property type="match status" value="1"/>
</dbReference>
<dbReference type="Gene3D" id="6.20.10.30">
    <property type="match status" value="1"/>
</dbReference>
<dbReference type="Gene3D" id="1.10.150.20">
    <property type="entry name" value="5' to 3' exonuclease, C-terminal subdomain"/>
    <property type="match status" value="2"/>
</dbReference>
<dbReference type="Gene3D" id="3.40.50.10190">
    <property type="entry name" value="BRCT domain"/>
    <property type="match status" value="1"/>
</dbReference>
<dbReference type="Gene3D" id="3.30.470.30">
    <property type="entry name" value="DNA ligase/mRNA capping enzyme"/>
    <property type="match status" value="1"/>
</dbReference>
<dbReference type="Gene3D" id="1.10.287.610">
    <property type="entry name" value="Helix hairpin bin"/>
    <property type="match status" value="1"/>
</dbReference>
<dbReference type="Gene3D" id="2.40.50.140">
    <property type="entry name" value="Nucleic acid-binding proteins"/>
    <property type="match status" value="1"/>
</dbReference>
<dbReference type="HAMAP" id="MF_01588">
    <property type="entry name" value="DNA_ligase_A"/>
    <property type="match status" value="1"/>
</dbReference>
<dbReference type="InterPro" id="IPR001357">
    <property type="entry name" value="BRCT_dom"/>
</dbReference>
<dbReference type="InterPro" id="IPR036420">
    <property type="entry name" value="BRCT_dom_sf"/>
</dbReference>
<dbReference type="InterPro" id="IPR041663">
    <property type="entry name" value="DisA/LigA_HHH"/>
</dbReference>
<dbReference type="InterPro" id="IPR001679">
    <property type="entry name" value="DNA_ligase"/>
</dbReference>
<dbReference type="InterPro" id="IPR018239">
    <property type="entry name" value="DNA_ligase_AS"/>
</dbReference>
<dbReference type="InterPro" id="IPR033136">
    <property type="entry name" value="DNA_ligase_CS"/>
</dbReference>
<dbReference type="InterPro" id="IPR013839">
    <property type="entry name" value="DNAligase_adenylation"/>
</dbReference>
<dbReference type="InterPro" id="IPR013840">
    <property type="entry name" value="DNAligase_N"/>
</dbReference>
<dbReference type="InterPro" id="IPR003583">
    <property type="entry name" value="Hlx-hairpin-Hlx_DNA-bd_motif"/>
</dbReference>
<dbReference type="InterPro" id="IPR012340">
    <property type="entry name" value="NA-bd_OB-fold"/>
</dbReference>
<dbReference type="InterPro" id="IPR004150">
    <property type="entry name" value="NAD_DNA_ligase_OB"/>
</dbReference>
<dbReference type="InterPro" id="IPR010994">
    <property type="entry name" value="RuvA_2-like"/>
</dbReference>
<dbReference type="InterPro" id="IPR004149">
    <property type="entry name" value="Znf_DNAligase_C4"/>
</dbReference>
<dbReference type="NCBIfam" id="TIGR00575">
    <property type="entry name" value="dnlj"/>
    <property type="match status" value="1"/>
</dbReference>
<dbReference type="NCBIfam" id="NF005932">
    <property type="entry name" value="PRK07956.1"/>
    <property type="match status" value="1"/>
</dbReference>
<dbReference type="PANTHER" id="PTHR23389">
    <property type="entry name" value="CHROMOSOME TRANSMISSION FIDELITY FACTOR 18"/>
    <property type="match status" value="1"/>
</dbReference>
<dbReference type="PANTHER" id="PTHR23389:SF9">
    <property type="entry name" value="DNA LIGASE"/>
    <property type="match status" value="1"/>
</dbReference>
<dbReference type="Pfam" id="PF00533">
    <property type="entry name" value="BRCT"/>
    <property type="match status" value="1"/>
</dbReference>
<dbReference type="Pfam" id="PF01653">
    <property type="entry name" value="DNA_ligase_aden"/>
    <property type="match status" value="1"/>
</dbReference>
<dbReference type="Pfam" id="PF03120">
    <property type="entry name" value="DNA_ligase_OB"/>
    <property type="match status" value="1"/>
</dbReference>
<dbReference type="Pfam" id="PF03119">
    <property type="entry name" value="DNA_ligase_ZBD"/>
    <property type="match status" value="1"/>
</dbReference>
<dbReference type="Pfam" id="PF12826">
    <property type="entry name" value="HHH_2"/>
    <property type="match status" value="1"/>
</dbReference>
<dbReference type="Pfam" id="PF14520">
    <property type="entry name" value="HHH_5"/>
    <property type="match status" value="1"/>
</dbReference>
<dbReference type="Pfam" id="PF22745">
    <property type="entry name" value="Nlig-Ia"/>
    <property type="match status" value="1"/>
</dbReference>
<dbReference type="PIRSF" id="PIRSF001604">
    <property type="entry name" value="LigA"/>
    <property type="match status" value="1"/>
</dbReference>
<dbReference type="SMART" id="SM00292">
    <property type="entry name" value="BRCT"/>
    <property type="match status" value="1"/>
</dbReference>
<dbReference type="SMART" id="SM00278">
    <property type="entry name" value="HhH1"/>
    <property type="match status" value="4"/>
</dbReference>
<dbReference type="SMART" id="SM00532">
    <property type="entry name" value="LIGANc"/>
    <property type="match status" value="1"/>
</dbReference>
<dbReference type="SUPFAM" id="SSF52113">
    <property type="entry name" value="BRCT domain"/>
    <property type="match status" value="1"/>
</dbReference>
<dbReference type="SUPFAM" id="SSF56091">
    <property type="entry name" value="DNA ligase/mRNA capping enzyme, catalytic domain"/>
    <property type="match status" value="1"/>
</dbReference>
<dbReference type="SUPFAM" id="SSF50249">
    <property type="entry name" value="Nucleic acid-binding proteins"/>
    <property type="match status" value="1"/>
</dbReference>
<dbReference type="SUPFAM" id="SSF47781">
    <property type="entry name" value="RuvA domain 2-like"/>
    <property type="match status" value="1"/>
</dbReference>
<dbReference type="PROSITE" id="PS50172">
    <property type="entry name" value="BRCT"/>
    <property type="match status" value="1"/>
</dbReference>
<dbReference type="PROSITE" id="PS01055">
    <property type="entry name" value="DNA_LIGASE_N1"/>
    <property type="match status" value="1"/>
</dbReference>
<dbReference type="PROSITE" id="PS01056">
    <property type="entry name" value="DNA_LIGASE_N2"/>
    <property type="match status" value="1"/>
</dbReference>
<proteinExistence type="inferred from homology"/>
<reference key="1">
    <citation type="submission" date="2007-11" db="EMBL/GenBank/DDBJ databases">
        <authorList>
            <consortium name="The Salmonella enterica serovar Paratyphi B Genome Sequencing Project"/>
            <person name="McClelland M."/>
            <person name="Sanderson E.K."/>
            <person name="Porwollik S."/>
            <person name="Spieth J."/>
            <person name="Clifton W.S."/>
            <person name="Fulton R."/>
            <person name="Cordes M."/>
            <person name="Wollam A."/>
            <person name="Shah N."/>
            <person name="Pepin K."/>
            <person name="Bhonagiri V."/>
            <person name="Nash W."/>
            <person name="Johnson M."/>
            <person name="Thiruvilangam P."/>
            <person name="Wilson R."/>
        </authorList>
    </citation>
    <scope>NUCLEOTIDE SEQUENCE [LARGE SCALE GENOMIC DNA]</scope>
    <source>
        <strain>ATCC BAA-1250 / SPB7</strain>
    </source>
</reference>
<comment type="function">
    <text evidence="1">DNA ligase that catalyzes the formation of phosphodiester linkages between 5'-phosphoryl and 3'-hydroxyl groups in double-stranded DNA using NAD as a coenzyme and as the energy source for the reaction. It is essential for DNA replication and repair of damaged DNA.</text>
</comment>
<comment type="catalytic activity">
    <reaction evidence="1">
        <text>NAD(+) + (deoxyribonucleotide)n-3'-hydroxyl + 5'-phospho-(deoxyribonucleotide)m = (deoxyribonucleotide)n+m + AMP + beta-nicotinamide D-nucleotide.</text>
        <dbReference type="EC" id="6.5.1.2"/>
    </reaction>
</comment>
<comment type="cofactor">
    <cofactor evidence="1">
        <name>Mg(2+)</name>
        <dbReference type="ChEBI" id="CHEBI:18420"/>
    </cofactor>
    <cofactor evidence="1">
        <name>Mn(2+)</name>
        <dbReference type="ChEBI" id="CHEBI:29035"/>
    </cofactor>
</comment>
<comment type="similarity">
    <text evidence="1">Belongs to the NAD-dependent DNA ligase family. LigA subfamily.</text>
</comment>
<name>DNLJ_SALPB</name>
<gene>
    <name evidence="1" type="primary">ligA</name>
    <name type="ordered locus">SPAB_00529</name>
</gene>